<protein>
    <recommendedName>
        <fullName evidence="1">Co-chaperonin GroES</fullName>
    </recommendedName>
    <alternativeName>
        <fullName evidence="1">10 kDa chaperonin</fullName>
    </alternativeName>
    <alternativeName>
        <fullName evidence="1">Chaperonin-10</fullName>
        <shortName evidence="1">Cpn10</shortName>
    </alternativeName>
</protein>
<organism>
    <name type="scientific">Caulobacter vibrioides (strain NA1000 / CB15N)</name>
    <name type="common">Caulobacter crescentus</name>
    <dbReference type="NCBI Taxonomy" id="565050"/>
    <lineage>
        <taxon>Bacteria</taxon>
        <taxon>Pseudomonadati</taxon>
        <taxon>Pseudomonadota</taxon>
        <taxon>Alphaproteobacteria</taxon>
        <taxon>Caulobacterales</taxon>
        <taxon>Caulobacteraceae</taxon>
        <taxon>Caulobacter</taxon>
    </lineage>
</organism>
<comment type="function">
    <text evidence="1">Together with the chaperonin GroEL, plays an essential role in assisting protein folding. The GroEL-GroES system forms a nano-cage that allows encapsulation of the non-native substrate proteins and provides a physical environment optimized to promote and accelerate protein folding. GroES binds to the apical surface of the GroEL ring, thereby capping the opening of the GroEL channel.</text>
</comment>
<comment type="subunit">
    <text evidence="1">Heptamer of 7 subunits arranged in a ring. Interacts with the chaperonin GroEL.</text>
</comment>
<comment type="subcellular location">
    <subcellularLocation>
        <location evidence="1">Cytoplasm</location>
    </subcellularLocation>
</comment>
<comment type="induction">
    <text evidence="2">By heat shock.</text>
</comment>
<comment type="similarity">
    <text evidence="1 3">Belongs to the GroES chaperonin family.</text>
</comment>
<evidence type="ECO:0000255" key="1">
    <source>
        <dbReference type="HAMAP-Rule" id="MF_00580"/>
    </source>
</evidence>
<evidence type="ECO:0000269" key="2">
    <source>
    </source>
</evidence>
<evidence type="ECO:0000305" key="3"/>
<proteinExistence type="evidence at transcript level"/>
<accession>B8H164</accession>
<accession>P48222</accession>
<sequence>MKFRPLGDRVLVKRVEEETKTKGGIIIPDTAKEKPQEGEVVAVGPGARNDKGDVVALDVKAGDRILFGKWSGTEVKVDGQDLLIMKESDVLGVVEA</sequence>
<feature type="chain" id="PRO_0000378280" description="Co-chaperonin GroES">
    <location>
        <begin position="1"/>
        <end position="96"/>
    </location>
</feature>
<feature type="sequence conflict" description="In Ref. 1; AAB18634." evidence="3" ref="1">
    <original>AV</original>
    <variation>RS</variation>
    <location>
        <begin position="42"/>
        <end position="43"/>
    </location>
</feature>
<feature type="sequence conflict" description="In Ref. 1; AAB18634." evidence="3" ref="1">
    <original>DKGDVVA</original>
    <variation>EHTSSP</variation>
    <location>
        <begin position="50"/>
        <end position="56"/>
    </location>
</feature>
<feature type="sequence conflict" description="In Ref. 1." evidence="3" ref="1">
    <original>E</original>
    <variation>ASEGTK</variation>
    <location>
        <position position="74"/>
    </location>
</feature>
<feature type="sequence conflict" description="In Ref. 1; AAB18634." evidence="3" ref="1">
    <original>DGQ</original>
    <variation>TS</variation>
    <location>
        <begin position="78"/>
        <end position="80"/>
    </location>
</feature>
<dbReference type="EMBL" id="L41394">
    <property type="protein sequence ID" value="AAB18634.1"/>
    <property type="molecule type" value="Genomic_DNA"/>
</dbReference>
<dbReference type="EMBL" id="CP001340">
    <property type="protein sequence ID" value="ACL94187.1"/>
    <property type="molecule type" value="Genomic_DNA"/>
</dbReference>
<dbReference type="PIR" id="S70668">
    <property type="entry name" value="S70668"/>
</dbReference>
<dbReference type="RefSeq" id="WP_010918572.1">
    <property type="nucleotide sequence ID" value="NC_011916.1"/>
</dbReference>
<dbReference type="RefSeq" id="YP_002516095.1">
    <property type="nucleotide sequence ID" value="NC_011916.1"/>
</dbReference>
<dbReference type="SMR" id="B8H164"/>
<dbReference type="GeneID" id="7330531"/>
<dbReference type="KEGG" id="ccs:CCNA_00722"/>
<dbReference type="PATRIC" id="fig|565050.3.peg.712"/>
<dbReference type="HOGENOM" id="CLU_132825_1_0_5"/>
<dbReference type="OrthoDB" id="9806791at2"/>
<dbReference type="PhylomeDB" id="B8H164"/>
<dbReference type="Proteomes" id="UP000001364">
    <property type="component" value="Chromosome"/>
</dbReference>
<dbReference type="GO" id="GO:0005737">
    <property type="term" value="C:cytoplasm"/>
    <property type="evidence" value="ECO:0007669"/>
    <property type="project" value="UniProtKB-SubCell"/>
</dbReference>
<dbReference type="GO" id="GO:0005524">
    <property type="term" value="F:ATP binding"/>
    <property type="evidence" value="ECO:0007669"/>
    <property type="project" value="InterPro"/>
</dbReference>
<dbReference type="GO" id="GO:0046872">
    <property type="term" value="F:metal ion binding"/>
    <property type="evidence" value="ECO:0007669"/>
    <property type="project" value="TreeGrafter"/>
</dbReference>
<dbReference type="GO" id="GO:0044183">
    <property type="term" value="F:protein folding chaperone"/>
    <property type="evidence" value="ECO:0007669"/>
    <property type="project" value="InterPro"/>
</dbReference>
<dbReference type="GO" id="GO:0051087">
    <property type="term" value="F:protein-folding chaperone binding"/>
    <property type="evidence" value="ECO:0007669"/>
    <property type="project" value="TreeGrafter"/>
</dbReference>
<dbReference type="GO" id="GO:0051082">
    <property type="term" value="F:unfolded protein binding"/>
    <property type="evidence" value="ECO:0007669"/>
    <property type="project" value="TreeGrafter"/>
</dbReference>
<dbReference type="GO" id="GO:0051085">
    <property type="term" value="P:chaperone cofactor-dependent protein refolding"/>
    <property type="evidence" value="ECO:0007669"/>
    <property type="project" value="TreeGrafter"/>
</dbReference>
<dbReference type="CDD" id="cd00320">
    <property type="entry name" value="cpn10"/>
    <property type="match status" value="1"/>
</dbReference>
<dbReference type="FunFam" id="2.30.33.40:FF:000001">
    <property type="entry name" value="10 kDa chaperonin"/>
    <property type="match status" value="1"/>
</dbReference>
<dbReference type="Gene3D" id="2.30.33.40">
    <property type="entry name" value="GroES chaperonin"/>
    <property type="match status" value="1"/>
</dbReference>
<dbReference type="HAMAP" id="MF_00580">
    <property type="entry name" value="CH10"/>
    <property type="match status" value="1"/>
</dbReference>
<dbReference type="InterPro" id="IPR020818">
    <property type="entry name" value="Chaperonin_GroES"/>
</dbReference>
<dbReference type="InterPro" id="IPR037124">
    <property type="entry name" value="Chaperonin_GroES_sf"/>
</dbReference>
<dbReference type="InterPro" id="IPR018369">
    <property type="entry name" value="Chaprnonin_Cpn10_CS"/>
</dbReference>
<dbReference type="InterPro" id="IPR011032">
    <property type="entry name" value="GroES-like_sf"/>
</dbReference>
<dbReference type="NCBIfam" id="NF001527">
    <property type="entry name" value="PRK00364.1-2"/>
    <property type="match status" value="1"/>
</dbReference>
<dbReference type="NCBIfam" id="NF001529">
    <property type="entry name" value="PRK00364.1-5"/>
    <property type="match status" value="1"/>
</dbReference>
<dbReference type="NCBIfam" id="NF001531">
    <property type="entry name" value="PRK00364.2-2"/>
    <property type="match status" value="1"/>
</dbReference>
<dbReference type="NCBIfam" id="NF001533">
    <property type="entry name" value="PRK00364.2-4"/>
    <property type="match status" value="1"/>
</dbReference>
<dbReference type="NCBIfam" id="NF001534">
    <property type="entry name" value="PRK00364.2-5"/>
    <property type="match status" value="1"/>
</dbReference>
<dbReference type="NCBIfam" id="NF001537">
    <property type="entry name" value="PRK00364.3-3"/>
    <property type="match status" value="1"/>
</dbReference>
<dbReference type="PANTHER" id="PTHR10772">
    <property type="entry name" value="10 KDA HEAT SHOCK PROTEIN"/>
    <property type="match status" value="1"/>
</dbReference>
<dbReference type="PANTHER" id="PTHR10772:SF58">
    <property type="entry name" value="CO-CHAPERONIN GROES"/>
    <property type="match status" value="1"/>
</dbReference>
<dbReference type="Pfam" id="PF00166">
    <property type="entry name" value="Cpn10"/>
    <property type="match status" value="1"/>
</dbReference>
<dbReference type="PRINTS" id="PR00297">
    <property type="entry name" value="CHAPERONIN10"/>
</dbReference>
<dbReference type="SMART" id="SM00883">
    <property type="entry name" value="Cpn10"/>
    <property type="match status" value="1"/>
</dbReference>
<dbReference type="SUPFAM" id="SSF50129">
    <property type="entry name" value="GroES-like"/>
    <property type="match status" value="1"/>
</dbReference>
<dbReference type="PROSITE" id="PS00681">
    <property type="entry name" value="CHAPERONINS_CPN10"/>
    <property type="match status" value="1"/>
</dbReference>
<name>CH10_CAUVN</name>
<reference key="1">
    <citation type="journal article" date="1996" name="Mol. Microbiol.">
        <title>Expression of the groESL operon is cell-cycle controlled in Caulobacter crescentus.</title>
        <authorList>
            <person name="Avedissian M."/>
            <person name="Gomes S.L."/>
        </authorList>
    </citation>
    <scope>NUCLEOTIDE SEQUENCE [GENOMIC DNA]</scope>
    <scope>OPERON STRUCTURE</scope>
    <scope>INDUCTION</scope>
</reference>
<reference key="2">
    <citation type="journal article" date="2010" name="J. Bacteriol.">
        <title>The genetic basis of laboratory adaptation in Caulobacter crescentus.</title>
        <authorList>
            <person name="Marks M.E."/>
            <person name="Castro-Rojas C.M."/>
            <person name="Teiling C."/>
            <person name="Du L."/>
            <person name="Kapatral V."/>
            <person name="Walunas T.L."/>
            <person name="Crosson S."/>
        </authorList>
    </citation>
    <scope>NUCLEOTIDE SEQUENCE [LARGE SCALE GENOMIC DNA]</scope>
    <source>
        <strain>NA1000 / CB15N</strain>
    </source>
</reference>
<keyword id="KW-0143">Chaperone</keyword>
<keyword id="KW-0963">Cytoplasm</keyword>
<keyword id="KW-1185">Reference proteome</keyword>
<gene>
    <name evidence="1" type="primary">groES</name>
    <name evidence="1" type="synonym">groS</name>
    <name type="synonym">mopB</name>
    <name type="ordered locus">CCNA_00722</name>
</gene>